<sequence>MDTVRVRFAPSPTGSLHIGGARTALFNWLFARHHGGAFILRLEDTDTGRNIDEAAAQIVSSLRWLGIDWDEGYDRGGPFGPYRQSERFELYREEARRLLANGDAYWCYCTPEDLAAQREEARQRGEVPRYDGRCRQLTDDARREKEAAGIRPALRVKMPKTGTTVVKDRIRGEIGFDNATLDDIIVMKSNGGPTYNFACVVDDGAMRISHVIRAEEHLSNTPKQIVLFNLLGYALPEFVHVPMILAPDRSKLSKRHGATAVDEFRADGFLPEALINYLALLGWSPGSEQEQFTVEELVASFSLDAVSKHAAIYDVKKLTWLNAQYLNSLPQARVVEAVRPFMQEAGYLSATPNPAELDYLSRVVEAVRSRVHTLAELRDASAYFYRSDFEYDDKGVRKHFTKPGVTNILARGRDALSRLPAGRFTVEGTEEAFRQVIEELGVSGGTLIHPTRLALSGRTVGPGLFDIIAVLGKEECLLRLDRAIAWIGANVNNANRTDACS</sequence>
<protein>
    <recommendedName>
        <fullName evidence="1">Glutamate--tRNA ligase</fullName>
        <ecNumber evidence="1">6.1.1.17</ecNumber>
    </recommendedName>
    <alternativeName>
        <fullName evidence="1">Glutamyl-tRNA synthetase</fullName>
        <shortName evidence="1">GluRS</shortName>
    </alternativeName>
</protein>
<proteinExistence type="inferred from homology"/>
<gene>
    <name evidence="1" type="primary">gltX</name>
    <name type="ordered locus">Daud_1531</name>
</gene>
<keyword id="KW-0030">Aminoacyl-tRNA synthetase</keyword>
<keyword id="KW-0067">ATP-binding</keyword>
<keyword id="KW-0963">Cytoplasm</keyword>
<keyword id="KW-0436">Ligase</keyword>
<keyword id="KW-0547">Nucleotide-binding</keyword>
<keyword id="KW-0648">Protein biosynthesis</keyword>
<keyword id="KW-1185">Reference proteome</keyword>
<comment type="function">
    <text evidence="1">Catalyzes the attachment of glutamate to tRNA(Glu) in a two-step reaction: glutamate is first activated by ATP to form Glu-AMP and then transferred to the acceptor end of tRNA(Glu).</text>
</comment>
<comment type="catalytic activity">
    <reaction evidence="1">
        <text>tRNA(Glu) + L-glutamate + ATP = L-glutamyl-tRNA(Glu) + AMP + diphosphate</text>
        <dbReference type="Rhea" id="RHEA:23540"/>
        <dbReference type="Rhea" id="RHEA-COMP:9663"/>
        <dbReference type="Rhea" id="RHEA-COMP:9680"/>
        <dbReference type="ChEBI" id="CHEBI:29985"/>
        <dbReference type="ChEBI" id="CHEBI:30616"/>
        <dbReference type="ChEBI" id="CHEBI:33019"/>
        <dbReference type="ChEBI" id="CHEBI:78442"/>
        <dbReference type="ChEBI" id="CHEBI:78520"/>
        <dbReference type="ChEBI" id="CHEBI:456215"/>
        <dbReference type="EC" id="6.1.1.17"/>
    </reaction>
</comment>
<comment type="subunit">
    <text evidence="1">Monomer.</text>
</comment>
<comment type="subcellular location">
    <subcellularLocation>
        <location evidence="1">Cytoplasm</location>
    </subcellularLocation>
</comment>
<comment type="similarity">
    <text evidence="1">Belongs to the class-I aminoacyl-tRNA synthetase family. Glutamate--tRNA ligase type 1 subfamily.</text>
</comment>
<dbReference type="EC" id="6.1.1.17" evidence="1"/>
<dbReference type="EMBL" id="CP000860">
    <property type="protein sequence ID" value="ACA60034.1"/>
    <property type="molecule type" value="Genomic_DNA"/>
</dbReference>
<dbReference type="RefSeq" id="WP_012302615.1">
    <property type="nucleotide sequence ID" value="NC_010424.1"/>
</dbReference>
<dbReference type="SMR" id="B1I4Z1"/>
<dbReference type="STRING" id="477974.Daud_1531"/>
<dbReference type="KEGG" id="dau:Daud_1531"/>
<dbReference type="eggNOG" id="COG0008">
    <property type="taxonomic scope" value="Bacteria"/>
</dbReference>
<dbReference type="HOGENOM" id="CLU_015768_6_3_9"/>
<dbReference type="OrthoDB" id="9807503at2"/>
<dbReference type="Proteomes" id="UP000008544">
    <property type="component" value="Chromosome"/>
</dbReference>
<dbReference type="GO" id="GO:0005829">
    <property type="term" value="C:cytosol"/>
    <property type="evidence" value="ECO:0007669"/>
    <property type="project" value="TreeGrafter"/>
</dbReference>
<dbReference type="GO" id="GO:0005524">
    <property type="term" value="F:ATP binding"/>
    <property type="evidence" value="ECO:0007669"/>
    <property type="project" value="UniProtKB-UniRule"/>
</dbReference>
<dbReference type="GO" id="GO:0004818">
    <property type="term" value="F:glutamate-tRNA ligase activity"/>
    <property type="evidence" value="ECO:0007669"/>
    <property type="project" value="UniProtKB-UniRule"/>
</dbReference>
<dbReference type="GO" id="GO:0000049">
    <property type="term" value="F:tRNA binding"/>
    <property type="evidence" value="ECO:0007669"/>
    <property type="project" value="InterPro"/>
</dbReference>
<dbReference type="GO" id="GO:0008270">
    <property type="term" value="F:zinc ion binding"/>
    <property type="evidence" value="ECO:0007669"/>
    <property type="project" value="InterPro"/>
</dbReference>
<dbReference type="GO" id="GO:0006424">
    <property type="term" value="P:glutamyl-tRNA aminoacylation"/>
    <property type="evidence" value="ECO:0007669"/>
    <property type="project" value="UniProtKB-UniRule"/>
</dbReference>
<dbReference type="CDD" id="cd00808">
    <property type="entry name" value="GluRS_core"/>
    <property type="match status" value="1"/>
</dbReference>
<dbReference type="FunFam" id="3.40.50.620:FF:000045">
    <property type="entry name" value="Glutamate--tRNA ligase, mitochondrial"/>
    <property type="match status" value="1"/>
</dbReference>
<dbReference type="Gene3D" id="1.10.10.350">
    <property type="match status" value="1"/>
</dbReference>
<dbReference type="Gene3D" id="1.10.8.70">
    <property type="entry name" value="Glutamate-tRNA synthetase, class I, anticodon-binding domain 1"/>
    <property type="match status" value="1"/>
</dbReference>
<dbReference type="Gene3D" id="3.40.50.620">
    <property type="entry name" value="HUPs"/>
    <property type="match status" value="1"/>
</dbReference>
<dbReference type="HAMAP" id="MF_00022">
    <property type="entry name" value="Glu_tRNA_synth_type1"/>
    <property type="match status" value="1"/>
</dbReference>
<dbReference type="InterPro" id="IPR045462">
    <property type="entry name" value="aa-tRNA-synth_I_cd-bd"/>
</dbReference>
<dbReference type="InterPro" id="IPR020751">
    <property type="entry name" value="aa-tRNA-synth_I_codon-bd_sub2"/>
</dbReference>
<dbReference type="InterPro" id="IPR001412">
    <property type="entry name" value="aa-tRNA-synth_I_CS"/>
</dbReference>
<dbReference type="InterPro" id="IPR008925">
    <property type="entry name" value="aa_tRNA-synth_I_cd-bd_sf"/>
</dbReference>
<dbReference type="InterPro" id="IPR004527">
    <property type="entry name" value="Glu-tRNA-ligase_bac/mito"/>
</dbReference>
<dbReference type="InterPro" id="IPR020752">
    <property type="entry name" value="Glu-tRNA-synth_I_codon-bd_sub1"/>
</dbReference>
<dbReference type="InterPro" id="IPR000924">
    <property type="entry name" value="Glu/Gln-tRNA-synth"/>
</dbReference>
<dbReference type="InterPro" id="IPR020058">
    <property type="entry name" value="Glu/Gln-tRNA-synth_Ib_cat-dom"/>
</dbReference>
<dbReference type="InterPro" id="IPR049940">
    <property type="entry name" value="GluQ/Sye"/>
</dbReference>
<dbReference type="InterPro" id="IPR033910">
    <property type="entry name" value="GluRS_core"/>
</dbReference>
<dbReference type="InterPro" id="IPR014729">
    <property type="entry name" value="Rossmann-like_a/b/a_fold"/>
</dbReference>
<dbReference type="NCBIfam" id="TIGR00464">
    <property type="entry name" value="gltX_bact"/>
    <property type="match status" value="1"/>
</dbReference>
<dbReference type="PANTHER" id="PTHR43311">
    <property type="entry name" value="GLUTAMATE--TRNA LIGASE"/>
    <property type="match status" value="1"/>
</dbReference>
<dbReference type="PANTHER" id="PTHR43311:SF2">
    <property type="entry name" value="GLUTAMATE--TRNA LIGASE, MITOCHONDRIAL-RELATED"/>
    <property type="match status" value="1"/>
</dbReference>
<dbReference type="Pfam" id="PF19269">
    <property type="entry name" value="Anticodon_2"/>
    <property type="match status" value="1"/>
</dbReference>
<dbReference type="Pfam" id="PF00749">
    <property type="entry name" value="tRNA-synt_1c"/>
    <property type="match status" value="1"/>
</dbReference>
<dbReference type="PRINTS" id="PR00987">
    <property type="entry name" value="TRNASYNTHGLU"/>
</dbReference>
<dbReference type="SUPFAM" id="SSF48163">
    <property type="entry name" value="An anticodon-binding domain of class I aminoacyl-tRNA synthetases"/>
    <property type="match status" value="1"/>
</dbReference>
<dbReference type="SUPFAM" id="SSF52374">
    <property type="entry name" value="Nucleotidylyl transferase"/>
    <property type="match status" value="1"/>
</dbReference>
<dbReference type="PROSITE" id="PS00178">
    <property type="entry name" value="AA_TRNA_LIGASE_I"/>
    <property type="match status" value="1"/>
</dbReference>
<reference key="1">
    <citation type="submission" date="2007-10" db="EMBL/GenBank/DDBJ databases">
        <title>Complete sequence of chromosome of Desulforudis audaxviator MP104C.</title>
        <authorList>
            <person name="Copeland A."/>
            <person name="Lucas S."/>
            <person name="Lapidus A."/>
            <person name="Barry K."/>
            <person name="Glavina del Rio T."/>
            <person name="Dalin E."/>
            <person name="Tice H."/>
            <person name="Bruce D."/>
            <person name="Pitluck S."/>
            <person name="Lowry S.R."/>
            <person name="Larimer F."/>
            <person name="Land M.L."/>
            <person name="Hauser L."/>
            <person name="Kyrpides N."/>
            <person name="Ivanova N.N."/>
            <person name="Richardson P."/>
        </authorList>
    </citation>
    <scope>NUCLEOTIDE SEQUENCE [LARGE SCALE GENOMIC DNA]</scope>
    <source>
        <strain>MP104C</strain>
    </source>
</reference>
<organism>
    <name type="scientific">Desulforudis audaxviator (strain MP104C)</name>
    <dbReference type="NCBI Taxonomy" id="477974"/>
    <lineage>
        <taxon>Bacteria</taxon>
        <taxon>Bacillati</taxon>
        <taxon>Bacillota</taxon>
        <taxon>Clostridia</taxon>
        <taxon>Thermoanaerobacterales</taxon>
        <taxon>Candidatus Desulforudaceae</taxon>
        <taxon>Candidatus Desulforudis</taxon>
    </lineage>
</organism>
<evidence type="ECO:0000255" key="1">
    <source>
        <dbReference type="HAMAP-Rule" id="MF_00022"/>
    </source>
</evidence>
<accession>B1I4Z1</accession>
<feature type="chain" id="PRO_0000367664" description="Glutamate--tRNA ligase">
    <location>
        <begin position="1"/>
        <end position="501"/>
    </location>
</feature>
<feature type="short sequence motif" description="'HIGH' region" evidence="1">
    <location>
        <begin position="10"/>
        <end position="20"/>
    </location>
</feature>
<feature type="short sequence motif" description="'KMSKS' region" evidence="1">
    <location>
        <begin position="251"/>
        <end position="255"/>
    </location>
</feature>
<feature type="binding site" evidence="1">
    <location>
        <position position="254"/>
    </location>
    <ligand>
        <name>ATP</name>
        <dbReference type="ChEBI" id="CHEBI:30616"/>
    </ligand>
</feature>
<name>SYE_DESAP</name>